<organism>
    <name type="scientific">Burkholderia multivorans (strain ATCC 17616 / 249)</name>
    <dbReference type="NCBI Taxonomy" id="395019"/>
    <lineage>
        <taxon>Bacteria</taxon>
        <taxon>Pseudomonadati</taxon>
        <taxon>Pseudomonadota</taxon>
        <taxon>Betaproteobacteria</taxon>
        <taxon>Burkholderiales</taxon>
        <taxon>Burkholderiaceae</taxon>
        <taxon>Burkholderia</taxon>
        <taxon>Burkholderia cepacia complex</taxon>
    </lineage>
</organism>
<feature type="chain" id="PRO_1000187739" description="Ubiquinone/menaquinone biosynthesis C-methyltransferase UbiE">
    <location>
        <begin position="1"/>
        <end position="243"/>
    </location>
</feature>
<feature type="binding site" evidence="1">
    <location>
        <position position="69"/>
    </location>
    <ligand>
        <name>S-adenosyl-L-methionine</name>
        <dbReference type="ChEBI" id="CHEBI:59789"/>
    </ligand>
</feature>
<feature type="binding site" evidence="1">
    <location>
        <position position="90"/>
    </location>
    <ligand>
        <name>S-adenosyl-L-methionine</name>
        <dbReference type="ChEBI" id="CHEBI:59789"/>
    </ligand>
</feature>
<feature type="binding site" evidence="1">
    <location>
        <begin position="116"/>
        <end position="117"/>
    </location>
    <ligand>
        <name>S-adenosyl-L-methionine</name>
        <dbReference type="ChEBI" id="CHEBI:59789"/>
    </ligand>
</feature>
<evidence type="ECO:0000255" key="1">
    <source>
        <dbReference type="HAMAP-Rule" id="MF_01813"/>
    </source>
</evidence>
<protein>
    <recommendedName>
        <fullName evidence="1">Ubiquinone/menaquinone biosynthesis C-methyltransferase UbiE</fullName>
        <ecNumber evidence="1">2.1.1.163</ecNumber>
        <ecNumber evidence="1">2.1.1.201</ecNumber>
    </recommendedName>
    <alternativeName>
        <fullName evidence="1">2-methoxy-6-polyprenyl-1,4-benzoquinol methylase</fullName>
    </alternativeName>
    <alternativeName>
        <fullName evidence="1">Demethylmenaquinone methyltransferase</fullName>
    </alternativeName>
</protein>
<comment type="function">
    <text evidence="1">Methyltransferase required for the conversion of demethylmenaquinol (DMKH2) to menaquinol (MKH2) and the conversion of 2-polyprenyl-6-methoxy-1,4-benzoquinol (DDMQH2) to 2-polyprenyl-3-methyl-6-methoxy-1,4-benzoquinol (DMQH2).</text>
</comment>
<comment type="catalytic activity">
    <reaction evidence="1">
        <text>a 2-demethylmenaquinol + S-adenosyl-L-methionine = a menaquinol + S-adenosyl-L-homocysteine + H(+)</text>
        <dbReference type="Rhea" id="RHEA:42640"/>
        <dbReference type="Rhea" id="RHEA-COMP:9539"/>
        <dbReference type="Rhea" id="RHEA-COMP:9563"/>
        <dbReference type="ChEBI" id="CHEBI:15378"/>
        <dbReference type="ChEBI" id="CHEBI:18151"/>
        <dbReference type="ChEBI" id="CHEBI:55437"/>
        <dbReference type="ChEBI" id="CHEBI:57856"/>
        <dbReference type="ChEBI" id="CHEBI:59789"/>
        <dbReference type="EC" id="2.1.1.163"/>
    </reaction>
</comment>
<comment type="catalytic activity">
    <reaction evidence="1">
        <text>a 2-methoxy-6-(all-trans-polyprenyl)benzene-1,4-diol + S-adenosyl-L-methionine = a 5-methoxy-2-methyl-3-(all-trans-polyprenyl)benzene-1,4-diol + S-adenosyl-L-homocysteine + H(+)</text>
        <dbReference type="Rhea" id="RHEA:28286"/>
        <dbReference type="Rhea" id="RHEA-COMP:10858"/>
        <dbReference type="Rhea" id="RHEA-COMP:10859"/>
        <dbReference type="ChEBI" id="CHEBI:15378"/>
        <dbReference type="ChEBI" id="CHEBI:57856"/>
        <dbReference type="ChEBI" id="CHEBI:59789"/>
        <dbReference type="ChEBI" id="CHEBI:84166"/>
        <dbReference type="ChEBI" id="CHEBI:84167"/>
        <dbReference type="EC" id="2.1.1.201"/>
    </reaction>
</comment>
<comment type="pathway">
    <text evidence="1">Quinol/quinone metabolism; menaquinone biosynthesis; menaquinol from 1,4-dihydroxy-2-naphthoate: step 2/2.</text>
</comment>
<comment type="pathway">
    <text evidence="1">Cofactor biosynthesis; ubiquinone biosynthesis.</text>
</comment>
<comment type="similarity">
    <text evidence="1">Belongs to the class I-like SAM-binding methyltransferase superfamily. MenG/UbiE family.</text>
</comment>
<sequence length="243" mass="27119">MSKTHFGFETVEETDKAKKVAGVFHSVANNYDLMNDLMSAGMHRAWKAFTIAQANVRPGYKVLDIAAGTGDLTKAFAKAAGPTGEVWHTDINESMLRVGRDRLLDKGIVTPSLLCDAEKIPFPDNYFDVVTVAFGLRNMTHKDVALAEMRRVAKPGGRVMVLEFSKVWEPLKKAYDLYSFKVLPWLGDKFAKDADSYRYLAESIRMHPDQDTLKTMMEQAGLDAVKYYNLSGGVVALHLGTKY</sequence>
<dbReference type="EC" id="2.1.1.163" evidence="1"/>
<dbReference type="EC" id="2.1.1.201" evidence="1"/>
<dbReference type="EMBL" id="CP000868">
    <property type="protein sequence ID" value="ABX14262.1"/>
    <property type="molecule type" value="Genomic_DNA"/>
</dbReference>
<dbReference type="EMBL" id="AP009385">
    <property type="protein sequence ID" value="BAG44584.1"/>
    <property type="molecule type" value="Genomic_DNA"/>
</dbReference>
<dbReference type="RefSeq" id="WP_006398300.1">
    <property type="nucleotide sequence ID" value="NC_010804.1"/>
</dbReference>
<dbReference type="SMR" id="A9AFC0"/>
<dbReference type="STRING" id="395019.BMULJ_02694"/>
<dbReference type="GeneID" id="89571280"/>
<dbReference type="KEGG" id="bmj:BMULJ_02694"/>
<dbReference type="KEGG" id="bmu:Bmul_0567"/>
<dbReference type="eggNOG" id="COG2226">
    <property type="taxonomic scope" value="Bacteria"/>
</dbReference>
<dbReference type="HOGENOM" id="CLU_037990_0_0_4"/>
<dbReference type="UniPathway" id="UPA00079">
    <property type="reaction ID" value="UER00169"/>
</dbReference>
<dbReference type="UniPathway" id="UPA00232"/>
<dbReference type="Proteomes" id="UP000008815">
    <property type="component" value="Chromosome 1"/>
</dbReference>
<dbReference type="GO" id="GO:0008425">
    <property type="term" value="F:2-methoxy-6-polyprenyl-1,4-benzoquinol methyltransferase activity"/>
    <property type="evidence" value="ECO:0007669"/>
    <property type="project" value="UniProtKB-UniRule"/>
</dbReference>
<dbReference type="GO" id="GO:0043770">
    <property type="term" value="F:demethylmenaquinone methyltransferase activity"/>
    <property type="evidence" value="ECO:0007669"/>
    <property type="project" value="UniProtKB-UniRule"/>
</dbReference>
<dbReference type="GO" id="GO:0009060">
    <property type="term" value="P:aerobic respiration"/>
    <property type="evidence" value="ECO:0007669"/>
    <property type="project" value="UniProtKB-UniRule"/>
</dbReference>
<dbReference type="GO" id="GO:0009234">
    <property type="term" value="P:menaquinone biosynthetic process"/>
    <property type="evidence" value="ECO:0007669"/>
    <property type="project" value="UniProtKB-UniRule"/>
</dbReference>
<dbReference type="GO" id="GO:0032259">
    <property type="term" value="P:methylation"/>
    <property type="evidence" value="ECO:0007669"/>
    <property type="project" value="UniProtKB-KW"/>
</dbReference>
<dbReference type="CDD" id="cd02440">
    <property type="entry name" value="AdoMet_MTases"/>
    <property type="match status" value="1"/>
</dbReference>
<dbReference type="Gene3D" id="3.40.50.150">
    <property type="entry name" value="Vaccinia Virus protein VP39"/>
    <property type="match status" value="1"/>
</dbReference>
<dbReference type="HAMAP" id="MF_01813">
    <property type="entry name" value="MenG_UbiE_methyltr"/>
    <property type="match status" value="1"/>
</dbReference>
<dbReference type="InterPro" id="IPR029063">
    <property type="entry name" value="SAM-dependent_MTases_sf"/>
</dbReference>
<dbReference type="InterPro" id="IPR004033">
    <property type="entry name" value="UbiE/COQ5_MeTrFase"/>
</dbReference>
<dbReference type="InterPro" id="IPR023576">
    <property type="entry name" value="UbiE/COQ5_MeTrFase_CS"/>
</dbReference>
<dbReference type="NCBIfam" id="TIGR01934">
    <property type="entry name" value="MenG_MenH_UbiE"/>
    <property type="match status" value="1"/>
</dbReference>
<dbReference type="NCBIfam" id="NF001240">
    <property type="entry name" value="PRK00216.1-1"/>
    <property type="match status" value="1"/>
</dbReference>
<dbReference type="PANTHER" id="PTHR43591:SF24">
    <property type="entry name" value="2-METHOXY-6-POLYPRENYL-1,4-BENZOQUINOL METHYLASE, MITOCHONDRIAL"/>
    <property type="match status" value="1"/>
</dbReference>
<dbReference type="PANTHER" id="PTHR43591">
    <property type="entry name" value="METHYLTRANSFERASE"/>
    <property type="match status" value="1"/>
</dbReference>
<dbReference type="Pfam" id="PF01209">
    <property type="entry name" value="Ubie_methyltran"/>
    <property type="match status" value="1"/>
</dbReference>
<dbReference type="SUPFAM" id="SSF53335">
    <property type="entry name" value="S-adenosyl-L-methionine-dependent methyltransferases"/>
    <property type="match status" value="1"/>
</dbReference>
<dbReference type="PROSITE" id="PS51608">
    <property type="entry name" value="SAM_MT_UBIE"/>
    <property type="match status" value="1"/>
</dbReference>
<dbReference type="PROSITE" id="PS01183">
    <property type="entry name" value="UBIE_1"/>
    <property type="match status" value="1"/>
</dbReference>
<gene>
    <name evidence="1" type="primary">ubiE</name>
    <name type="ordered locus">Bmul_0567</name>
    <name type="ordered locus">BMULJ_02694</name>
</gene>
<keyword id="KW-0474">Menaquinone biosynthesis</keyword>
<keyword id="KW-0489">Methyltransferase</keyword>
<keyword id="KW-1185">Reference proteome</keyword>
<keyword id="KW-0949">S-adenosyl-L-methionine</keyword>
<keyword id="KW-0808">Transferase</keyword>
<keyword id="KW-0831">Ubiquinone biosynthesis</keyword>
<accession>A9AFC0</accession>
<reference key="1">
    <citation type="submission" date="2007-10" db="EMBL/GenBank/DDBJ databases">
        <title>Complete sequence of chromosome 1 of Burkholderia multivorans ATCC 17616.</title>
        <authorList>
            <person name="Copeland A."/>
            <person name="Lucas S."/>
            <person name="Lapidus A."/>
            <person name="Barry K."/>
            <person name="Glavina del Rio T."/>
            <person name="Dalin E."/>
            <person name="Tice H."/>
            <person name="Pitluck S."/>
            <person name="Chain P."/>
            <person name="Malfatti S."/>
            <person name="Shin M."/>
            <person name="Vergez L."/>
            <person name="Schmutz J."/>
            <person name="Larimer F."/>
            <person name="Land M."/>
            <person name="Hauser L."/>
            <person name="Kyrpides N."/>
            <person name="Kim E."/>
            <person name="Tiedje J."/>
            <person name="Richardson P."/>
        </authorList>
    </citation>
    <scope>NUCLEOTIDE SEQUENCE [LARGE SCALE GENOMIC DNA]</scope>
    <source>
        <strain>ATCC 17616 / 249</strain>
    </source>
</reference>
<reference key="2">
    <citation type="submission" date="2007-04" db="EMBL/GenBank/DDBJ databases">
        <title>Complete genome sequence of Burkholderia multivorans ATCC 17616.</title>
        <authorList>
            <person name="Ohtsubo Y."/>
            <person name="Yamashita A."/>
            <person name="Kurokawa K."/>
            <person name="Takami H."/>
            <person name="Yuhara S."/>
            <person name="Nishiyama E."/>
            <person name="Endo R."/>
            <person name="Miyazaki R."/>
            <person name="Ono A."/>
            <person name="Yano K."/>
            <person name="Ito M."/>
            <person name="Sota M."/>
            <person name="Yuji N."/>
            <person name="Hattori M."/>
            <person name="Tsuda M."/>
        </authorList>
    </citation>
    <scope>NUCLEOTIDE SEQUENCE [LARGE SCALE GENOMIC DNA]</scope>
    <source>
        <strain>ATCC 17616 / 249</strain>
    </source>
</reference>
<proteinExistence type="inferred from homology"/>
<name>UBIE_BURM1</name>